<gene>
    <name evidence="1" type="primary">Mocs2A</name>
    <name evidence="2" type="synonym">Mocs2</name>
    <name type="ORF">GD18231</name>
</gene>
<reference key="1">
    <citation type="journal article" date="2007" name="Nature">
        <title>Evolution of genes and genomes on the Drosophila phylogeny.</title>
        <authorList>
            <consortium name="Drosophila 12 genomes consortium"/>
        </authorList>
    </citation>
    <scope>NUCLEOTIDE SEQUENCE [LARGE SCALE GENOMIC DNA]</scope>
</reference>
<sequence length="90" mass="9830">MNADGPVVNVHVLFFAKSRELANTPRSTVDVPTEITATELLDHLVSKFGLTSIRDNLILAHNESYIDNLSDRILFKEGDELAVIPPLSGG</sequence>
<feature type="chain" id="PRO_0000369314" description="Molybdopterin synthase sulfur carrier subunit">
    <location>
        <begin position="1"/>
        <end position="90"/>
    </location>
</feature>
<feature type="modified residue" description="1-thioglycine; alternate" evidence="2">
    <location>
        <position position="90"/>
    </location>
</feature>
<feature type="modified residue" description="Glycyl adenylate; alternate" evidence="2">
    <location>
        <position position="90"/>
    </location>
</feature>
<name>MOC2A_DROSI</name>
<organism>
    <name type="scientific">Drosophila simulans</name>
    <name type="common">Fruit fly</name>
    <dbReference type="NCBI Taxonomy" id="7240"/>
    <lineage>
        <taxon>Eukaryota</taxon>
        <taxon>Metazoa</taxon>
        <taxon>Ecdysozoa</taxon>
        <taxon>Arthropoda</taxon>
        <taxon>Hexapoda</taxon>
        <taxon>Insecta</taxon>
        <taxon>Pterygota</taxon>
        <taxon>Neoptera</taxon>
        <taxon>Endopterygota</taxon>
        <taxon>Diptera</taxon>
        <taxon>Brachycera</taxon>
        <taxon>Muscomorpha</taxon>
        <taxon>Ephydroidea</taxon>
        <taxon>Drosophilidae</taxon>
        <taxon>Drosophila</taxon>
        <taxon>Sophophora</taxon>
    </lineage>
</organism>
<proteinExistence type="inferred from homology"/>
<dbReference type="EMBL" id="CM000364">
    <property type="protein sequence ID" value="EDX14358.1"/>
    <property type="molecule type" value="Genomic_DNA"/>
</dbReference>
<dbReference type="RefSeq" id="XP_016036218.1">
    <property type="nucleotide sequence ID" value="XM_016174732.1"/>
</dbReference>
<dbReference type="SMR" id="B4QUC1"/>
<dbReference type="STRING" id="7240.B4QUC1"/>
<dbReference type="EnsemblMetazoa" id="FBtr0358726">
    <property type="protein sequence ID" value="FBpp0322706"/>
    <property type="gene ID" value="FBgn0189765"/>
</dbReference>
<dbReference type="EnsemblMetazoa" id="XM_044923483.1">
    <property type="protein sequence ID" value="XP_044779418.1"/>
    <property type="gene ID" value="LOC27206429"/>
</dbReference>
<dbReference type="KEGG" id="dsi:Dsimw501_GD18231"/>
<dbReference type="HOGENOM" id="CLU_114601_4_3_1"/>
<dbReference type="OMA" id="HVLFFAK"/>
<dbReference type="OrthoDB" id="5531344at2759"/>
<dbReference type="PhylomeDB" id="B4QUC1"/>
<dbReference type="UniPathway" id="UPA00344"/>
<dbReference type="Proteomes" id="UP000000304">
    <property type="component" value="Chromosome 3R"/>
</dbReference>
<dbReference type="Bgee" id="FBgn0189765">
    <property type="expression patterns" value="Expressed in embryo and 3 other cell types or tissues"/>
</dbReference>
<dbReference type="GO" id="GO:0005829">
    <property type="term" value="C:cytosol"/>
    <property type="evidence" value="ECO:0000250"/>
    <property type="project" value="UniProtKB"/>
</dbReference>
<dbReference type="GO" id="GO:1990133">
    <property type="term" value="C:molybdopterin adenylyltransferase complex"/>
    <property type="evidence" value="ECO:0007669"/>
    <property type="project" value="TreeGrafter"/>
</dbReference>
<dbReference type="GO" id="GO:1990140">
    <property type="term" value="C:molybdopterin synthase complex"/>
    <property type="evidence" value="ECO:0000250"/>
    <property type="project" value="UniProtKB"/>
</dbReference>
<dbReference type="GO" id="GO:0030366">
    <property type="term" value="F:molybdopterin synthase activity"/>
    <property type="evidence" value="ECO:0007669"/>
    <property type="project" value="UniProtKB-UniRule"/>
</dbReference>
<dbReference type="GO" id="GO:0000166">
    <property type="term" value="F:nucleotide binding"/>
    <property type="evidence" value="ECO:0007669"/>
    <property type="project" value="UniProtKB-KW"/>
</dbReference>
<dbReference type="GO" id="GO:0006777">
    <property type="term" value="P:Mo-molybdopterin cofactor biosynthetic process"/>
    <property type="evidence" value="ECO:0000250"/>
    <property type="project" value="UniProtKB"/>
</dbReference>
<dbReference type="CDD" id="cd00754">
    <property type="entry name" value="Ubl_MoaD"/>
    <property type="match status" value="1"/>
</dbReference>
<dbReference type="FunFam" id="3.10.20.30:FF:000010">
    <property type="entry name" value="Molybdopterin synthase sulfur carrier subunit"/>
    <property type="match status" value="1"/>
</dbReference>
<dbReference type="Gene3D" id="3.10.20.30">
    <property type="match status" value="1"/>
</dbReference>
<dbReference type="HAMAP" id="MF_03051">
    <property type="entry name" value="MOCS2A"/>
    <property type="match status" value="1"/>
</dbReference>
<dbReference type="InterPro" id="IPR012675">
    <property type="entry name" value="Beta-grasp_dom_sf"/>
</dbReference>
<dbReference type="InterPro" id="IPR044672">
    <property type="entry name" value="MOCS2A"/>
</dbReference>
<dbReference type="InterPro" id="IPR028887">
    <property type="entry name" value="MOCS2A_euk"/>
</dbReference>
<dbReference type="InterPro" id="IPR016155">
    <property type="entry name" value="Mopterin_synth/thiamin_S_b"/>
</dbReference>
<dbReference type="InterPro" id="IPR003749">
    <property type="entry name" value="ThiS/MoaD-like"/>
</dbReference>
<dbReference type="NCBIfam" id="TIGR01682">
    <property type="entry name" value="moaD"/>
    <property type="match status" value="1"/>
</dbReference>
<dbReference type="PANTHER" id="PTHR33359">
    <property type="entry name" value="MOLYBDOPTERIN SYNTHASE SULFUR CARRIER SUBUNIT"/>
    <property type="match status" value="1"/>
</dbReference>
<dbReference type="PANTHER" id="PTHR33359:SF1">
    <property type="entry name" value="MOLYBDOPTERIN SYNTHASE SULFUR CARRIER SUBUNIT"/>
    <property type="match status" value="1"/>
</dbReference>
<dbReference type="Pfam" id="PF02597">
    <property type="entry name" value="ThiS"/>
    <property type="match status" value="1"/>
</dbReference>
<dbReference type="SUPFAM" id="SSF54285">
    <property type="entry name" value="MoaD/ThiS"/>
    <property type="match status" value="1"/>
</dbReference>
<evidence type="ECO:0000250" key="1">
    <source>
        <dbReference type="UniProtKB" id="P0C919"/>
    </source>
</evidence>
<evidence type="ECO:0000255" key="2">
    <source>
        <dbReference type="HAMAP-Rule" id="MF_03051"/>
    </source>
</evidence>
<accession>B4QUC1</accession>
<comment type="function">
    <text evidence="2">Acts as a sulfur carrier required for molybdopterin biosynthesis. Component of the molybdopterin synthase complex that catalyzes the conversion of precursor Z into molybdopterin by mediating the incorporation of 2 sulfur atoms into precursor Z to generate a dithiolene group. In the complex, serves as sulfur donor by being thiocarboxylated (-COSH) at its C-terminus by MOCS3. After interaction with Mocs2B, the sulfur is then transferred to precursor Z to form molybdopterin.</text>
</comment>
<comment type="pathway">
    <text evidence="2">Cofactor biosynthesis; molybdopterin biosynthesis.</text>
</comment>
<comment type="subunit">
    <text evidence="2">Heterotetramer; composed of 2 small (Mocs2A) and 2 large (Mocs2B) subunits.</text>
</comment>
<comment type="subcellular location">
    <subcellularLocation>
        <location evidence="2">Cytoplasm</location>
    </subcellularLocation>
</comment>
<comment type="PTM">
    <text evidence="2">C-terminal thiocarboxylation occurs in 2 steps, it is first acyl-adenylated (-COAMP) via the hesA/moeB/thiF part of MOCS3, then thiocarboxylated (-COSH) via the rhodanese domain of MOCS3.</text>
</comment>
<comment type="miscellaneous">
    <text>This protein is produced by a bicistronic gene which also produces the large subunit (Mocs2B).</text>
</comment>
<comment type="similarity">
    <text evidence="2">Belongs to the MoaD family. MOCS2A subfamily.</text>
</comment>
<protein>
    <recommendedName>
        <fullName evidence="2">Molybdopterin synthase sulfur carrier subunit</fullName>
    </recommendedName>
    <alternativeName>
        <fullName evidence="2">Molybdenum cofactor synthesis protein 2 small subunit</fullName>
    </alternativeName>
    <alternativeName>
        <fullName evidence="2">Molybdenum cofactor synthesis protein 2A</fullName>
        <shortName evidence="2">MOCS2A</shortName>
    </alternativeName>
    <alternativeName>
        <fullName evidence="2">Sulfur carrier protein MOCS2A</fullName>
    </alternativeName>
</protein>
<keyword id="KW-0963">Cytoplasm</keyword>
<keyword id="KW-0501">Molybdenum cofactor biosynthesis</keyword>
<keyword id="KW-0547">Nucleotide-binding</keyword>
<keyword id="KW-0597">Phosphoprotein</keyword>
<keyword id="KW-1185">Reference proteome</keyword>